<accession>D3DK66</accession>
<feature type="chain" id="PRO_0000412086" description="6-carboxyhexanoate--CoA ligase">
    <location>
        <begin position="1"/>
        <end position="244"/>
    </location>
</feature>
<comment type="function">
    <text evidence="1">Catalyzes the transformation of pimelate into pimeloyl-CoA with concomitant hydrolysis of ATP to AMP.</text>
</comment>
<comment type="catalytic activity">
    <reaction evidence="1">
        <text>heptanedioate + ATP + CoA = 6-carboxyhexanoyl-CoA + AMP + diphosphate</text>
        <dbReference type="Rhea" id="RHEA:14781"/>
        <dbReference type="ChEBI" id="CHEBI:30616"/>
        <dbReference type="ChEBI" id="CHEBI:33019"/>
        <dbReference type="ChEBI" id="CHEBI:36165"/>
        <dbReference type="ChEBI" id="CHEBI:57287"/>
        <dbReference type="ChEBI" id="CHEBI:57360"/>
        <dbReference type="ChEBI" id="CHEBI:456215"/>
        <dbReference type="EC" id="6.2.1.14"/>
    </reaction>
</comment>
<comment type="cofactor">
    <cofactor evidence="1">
        <name>Mg(2+)</name>
        <dbReference type="ChEBI" id="CHEBI:18420"/>
    </cofactor>
</comment>
<comment type="pathway">
    <text evidence="1">Metabolic intermediate metabolism; pimeloyl-CoA biosynthesis; pimeloyl-CoA from pimelate: step 1/1.</text>
</comment>
<comment type="subunit">
    <text evidence="1">Homodimer.</text>
</comment>
<comment type="similarity">
    <text evidence="1">Belongs to the BioW family.</text>
</comment>
<sequence length="244" mass="28195">MRSVRMRAELDGMHVSGAERVIPHYELEKVVMELLKRPKRYDKIVITIERVENLETIPKSLPIKSHDFADVEQAHEFVIKKLKEIGIEESITQKALKLLTEGPNPKGGNMRGAVLMDPVSGERLEPDQERGIRTTRIDWRNRTAIKEALRERGIKKFYLERLIDALAIATKNIHCGVIAEICWSDDPEYTTGYIASKEFGYIRIKPMKEEHTPTGGRVYFVKRESLQELIECLERKVMLIEQLL</sequence>
<gene>
    <name evidence="1" type="primary">bioW</name>
    <name type="ordered locus">HTH_1774</name>
    <name type="ordered locus">Hydth_1756</name>
</gene>
<name>BIOW_HYDTT</name>
<keyword id="KW-0067">ATP-binding</keyword>
<keyword id="KW-0093">Biotin biosynthesis</keyword>
<keyword id="KW-0436">Ligase</keyword>
<keyword id="KW-0460">Magnesium</keyword>
<keyword id="KW-0547">Nucleotide-binding</keyword>
<keyword id="KW-1185">Reference proteome</keyword>
<proteinExistence type="inferred from homology"/>
<reference key="1">
    <citation type="journal article" date="2010" name="J. Bacteriol.">
        <title>Complete genome sequence of the thermophilic, obligately chemolithoautotrophic hydrogen-oxidizing bacterium Hydrogenobacter thermophilus TK-6.</title>
        <authorList>
            <person name="Arai H."/>
            <person name="Kanbe H."/>
            <person name="Ishii M."/>
            <person name="Igarashi Y."/>
        </authorList>
    </citation>
    <scope>NUCLEOTIDE SEQUENCE [LARGE SCALE GENOMIC DNA]</scope>
    <source>
        <strain>DSM 6534 / IAM 12695 / TK-6</strain>
    </source>
</reference>
<reference key="2">
    <citation type="journal article" date="2011" name="Stand. Genomic Sci.">
        <title>Complete genome sequence of Hydrogenobacter thermophilus type strain (TK-6).</title>
        <authorList>
            <consortium name="US DOE Joint Genome Institute (JGI-PGF)"/>
            <person name="Zeytun A."/>
            <person name="Sikorski J."/>
            <person name="Nolan M."/>
            <person name="Lapidus A."/>
            <person name="Lucas S."/>
            <person name="Han J."/>
            <person name="Tice H."/>
            <person name="Cheng J.F."/>
            <person name="Tapia R."/>
            <person name="Goodwin L."/>
            <person name="Pitluck S."/>
            <person name="Liolios K."/>
            <person name="Ivanova N."/>
            <person name="Mavromatis K."/>
            <person name="Mikhailova N."/>
            <person name="Ovchinnikova G."/>
            <person name="Pati A."/>
            <person name="Chen A."/>
            <person name="Palaniappan K."/>
            <person name="Ngatchou-Djao O.D."/>
            <person name="Land M."/>
            <person name="Hauser L."/>
            <person name="Jeffries C.D."/>
            <person name="Han C."/>
            <person name="Detter J.C."/>
            <person name="Ubler S."/>
            <person name="Rohde M."/>
            <person name="Tindall B.J."/>
            <person name="Goker M."/>
            <person name="Wirth R."/>
            <person name="Woyke T."/>
            <person name="Bristow J."/>
            <person name="Eisen J.A."/>
            <person name="Markowitz V."/>
            <person name="Hugenholtz P."/>
            <person name="Klenk H.P."/>
            <person name="Kyrpides N.C."/>
        </authorList>
    </citation>
    <scope>NUCLEOTIDE SEQUENCE [LARGE SCALE GENOMIC DNA]</scope>
    <source>
        <strain>DSM 6534 / IAM 12695 / TK-6</strain>
    </source>
</reference>
<evidence type="ECO:0000255" key="1">
    <source>
        <dbReference type="HAMAP-Rule" id="MF_00668"/>
    </source>
</evidence>
<protein>
    <recommendedName>
        <fullName evidence="1">6-carboxyhexanoate--CoA ligase</fullName>
        <ecNumber evidence="1">6.2.1.14</ecNumber>
    </recommendedName>
    <alternativeName>
        <fullName evidence="1">Pimeloyl-CoA synthase</fullName>
    </alternativeName>
</protein>
<dbReference type="EC" id="6.2.1.14" evidence="1"/>
<dbReference type="EMBL" id="CP002221">
    <property type="protein sequence ID" value="ADO46137.1"/>
    <property type="molecule type" value="Genomic_DNA"/>
</dbReference>
<dbReference type="EMBL" id="AP011112">
    <property type="protein sequence ID" value="BAI70218.1"/>
    <property type="molecule type" value="Genomic_DNA"/>
</dbReference>
<dbReference type="RefSeq" id="WP_012964398.1">
    <property type="nucleotide sequence ID" value="NC_013799.1"/>
</dbReference>
<dbReference type="SMR" id="D3DK66"/>
<dbReference type="STRING" id="608538.HTH_1774"/>
<dbReference type="KEGG" id="hte:Hydth_1756"/>
<dbReference type="KEGG" id="hth:HTH_1774"/>
<dbReference type="PATRIC" id="fig|608538.5.peg.1790"/>
<dbReference type="eggNOG" id="COG1424">
    <property type="taxonomic scope" value="Bacteria"/>
</dbReference>
<dbReference type="HOGENOM" id="CLU_076858_0_0_0"/>
<dbReference type="OrthoDB" id="9792985at2"/>
<dbReference type="UniPathway" id="UPA00999">
    <property type="reaction ID" value="UER00351"/>
</dbReference>
<dbReference type="Proteomes" id="UP000002574">
    <property type="component" value="Chromosome"/>
</dbReference>
<dbReference type="GO" id="GO:0042410">
    <property type="term" value="F:6-carboxyhexanoate-CoA ligase activity"/>
    <property type="evidence" value="ECO:0007669"/>
    <property type="project" value="UniProtKB-UniRule"/>
</dbReference>
<dbReference type="GO" id="GO:0005524">
    <property type="term" value="F:ATP binding"/>
    <property type="evidence" value="ECO:0007669"/>
    <property type="project" value="UniProtKB-KW"/>
</dbReference>
<dbReference type="GO" id="GO:0000287">
    <property type="term" value="F:magnesium ion binding"/>
    <property type="evidence" value="ECO:0007669"/>
    <property type="project" value="UniProtKB-UniRule"/>
</dbReference>
<dbReference type="GO" id="GO:0009102">
    <property type="term" value="P:biotin biosynthetic process"/>
    <property type="evidence" value="ECO:0007669"/>
    <property type="project" value="UniProtKB-UniRule"/>
</dbReference>
<dbReference type="HAMAP" id="MF_00668">
    <property type="entry name" value="BioW"/>
    <property type="match status" value="1"/>
</dbReference>
<dbReference type="InterPro" id="IPR005499">
    <property type="entry name" value="BioW"/>
</dbReference>
<dbReference type="NCBIfam" id="TIGR01204">
    <property type="entry name" value="bioW"/>
    <property type="match status" value="1"/>
</dbReference>
<dbReference type="NCBIfam" id="NF002360">
    <property type="entry name" value="PRK01322.1"/>
    <property type="match status" value="1"/>
</dbReference>
<dbReference type="Pfam" id="PF03744">
    <property type="entry name" value="BioW"/>
    <property type="match status" value="1"/>
</dbReference>
<organism>
    <name type="scientific">Hydrogenobacter thermophilus (strain DSM 6534 / IAM 12695 / TK-6)</name>
    <dbReference type="NCBI Taxonomy" id="608538"/>
    <lineage>
        <taxon>Bacteria</taxon>
        <taxon>Pseudomonadati</taxon>
        <taxon>Aquificota</taxon>
        <taxon>Aquificia</taxon>
        <taxon>Aquificales</taxon>
        <taxon>Aquificaceae</taxon>
        <taxon>Hydrogenobacter</taxon>
    </lineage>
</organism>